<sequence>MHCPFCTAVDTKVIDSRLVGDGSQVRRRRQCLVCHERFTTFEVAELVMPRVVKSDEIREPFDEEKLRRGMLKALEKRPVSSDDVEAAINHIKSQLRATGEREIPSKQIGNFVMEQLKKLDKVAYIRFASVYRSFEDVRDFGEEIAKLQD</sequence>
<protein>
    <recommendedName>
        <fullName evidence="1">Transcriptional repressor NrdR</fullName>
    </recommendedName>
</protein>
<gene>
    <name evidence="1" type="primary">nrdR</name>
    <name type="ordered locus">PMI0080</name>
</gene>
<organism>
    <name type="scientific">Proteus mirabilis (strain HI4320)</name>
    <dbReference type="NCBI Taxonomy" id="529507"/>
    <lineage>
        <taxon>Bacteria</taxon>
        <taxon>Pseudomonadati</taxon>
        <taxon>Pseudomonadota</taxon>
        <taxon>Gammaproteobacteria</taxon>
        <taxon>Enterobacterales</taxon>
        <taxon>Morganellaceae</taxon>
        <taxon>Proteus</taxon>
    </lineage>
</organism>
<proteinExistence type="inferred from homology"/>
<feature type="chain" id="PRO_1000124532" description="Transcriptional repressor NrdR">
    <location>
        <begin position="1"/>
        <end position="149"/>
    </location>
</feature>
<feature type="domain" description="ATP-cone" evidence="1">
    <location>
        <begin position="49"/>
        <end position="139"/>
    </location>
</feature>
<feature type="zinc finger region" evidence="1">
    <location>
        <begin position="3"/>
        <end position="34"/>
    </location>
</feature>
<dbReference type="EMBL" id="AM942759">
    <property type="protein sequence ID" value="CAR40324.1"/>
    <property type="molecule type" value="Genomic_DNA"/>
</dbReference>
<dbReference type="RefSeq" id="WP_004245139.1">
    <property type="nucleotide sequence ID" value="NC_010554.1"/>
</dbReference>
<dbReference type="SMR" id="B4EU17"/>
<dbReference type="EnsemblBacteria" id="CAR40324">
    <property type="protein sequence ID" value="CAR40324"/>
    <property type="gene ID" value="PMI0080"/>
</dbReference>
<dbReference type="GeneID" id="6802391"/>
<dbReference type="KEGG" id="pmr:PMI0080"/>
<dbReference type="eggNOG" id="COG1327">
    <property type="taxonomic scope" value="Bacteria"/>
</dbReference>
<dbReference type="HOGENOM" id="CLU_108412_0_0_6"/>
<dbReference type="Proteomes" id="UP000008319">
    <property type="component" value="Chromosome"/>
</dbReference>
<dbReference type="GO" id="GO:0005524">
    <property type="term" value="F:ATP binding"/>
    <property type="evidence" value="ECO:0007669"/>
    <property type="project" value="UniProtKB-KW"/>
</dbReference>
<dbReference type="GO" id="GO:0003677">
    <property type="term" value="F:DNA binding"/>
    <property type="evidence" value="ECO:0007669"/>
    <property type="project" value="UniProtKB-KW"/>
</dbReference>
<dbReference type="GO" id="GO:0008270">
    <property type="term" value="F:zinc ion binding"/>
    <property type="evidence" value="ECO:0007669"/>
    <property type="project" value="UniProtKB-UniRule"/>
</dbReference>
<dbReference type="GO" id="GO:0045892">
    <property type="term" value="P:negative regulation of DNA-templated transcription"/>
    <property type="evidence" value="ECO:0007669"/>
    <property type="project" value="UniProtKB-UniRule"/>
</dbReference>
<dbReference type="HAMAP" id="MF_00440">
    <property type="entry name" value="NrdR"/>
    <property type="match status" value="1"/>
</dbReference>
<dbReference type="InterPro" id="IPR005144">
    <property type="entry name" value="ATP-cone_dom"/>
</dbReference>
<dbReference type="InterPro" id="IPR055173">
    <property type="entry name" value="NrdR-like_N"/>
</dbReference>
<dbReference type="InterPro" id="IPR003796">
    <property type="entry name" value="RNR_NrdR-like"/>
</dbReference>
<dbReference type="NCBIfam" id="TIGR00244">
    <property type="entry name" value="transcriptional regulator NrdR"/>
    <property type="match status" value="1"/>
</dbReference>
<dbReference type="PANTHER" id="PTHR30455">
    <property type="entry name" value="TRANSCRIPTIONAL REPRESSOR NRDR"/>
    <property type="match status" value="1"/>
</dbReference>
<dbReference type="PANTHER" id="PTHR30455:SF2">
    <property type="entry name" value="TRANSCRIPTIONAL REPRESSOR NRDR"/>
    <property type="match status" value="1"/>
</dbReference>
<dbReference type="Pfam" id="PF03477">
    <property type="entry name" value="ATP-cone"/>
    <property type="match status" value="1"/>
</dbReference>
<dbReference type="Pfam" id="PF22811">
    <property type="entry name" value="Zn_ribbon_NrdR"/>
    <property type="match status" value="1"/>
</dbReference>
<dbReference type="PROSITE" id="PS51161">
    <property type="entry name" value="ATP_CONE"/>
    <property type="match status" value="1"/>
</dbReference>
<accession>B4EU17</accession>
<comment type="function">
    <text evidence="1">Negatively regulates transcription of bacterial ribonucleotide reductase nrd genes and operons by binding to NrdR-boxes.</text>
</comment>
<comment type="cofactor">
    <cofactor evidence="1">
        <name>Zn(2+)</name>
        <dbReference type="ChEBI" id="CHEBI:29105"/>
    </cofactor>
    <text evidence="1">Binds 1 zinc ion.</text>
</comment>
<comment type="similarity">
    <text evidence="1">Belongs to the NrdR family.</text>
</comment>
<keyword id="KW-0067">ATP-binding</keyword>
<keyword id="KW-0238">DNA-binding</keyword>
<keyword id="KW-0479">Metal-binding</keyword>
<keyword id="KW-0547">Nucleotide-binding</keyword>
<keyword id="KW-1185">Reference proteome</keyword>
<keyword id="KW-0678">Repressor</keyword>
<keyword id="KW-0804">Transcription</keyword>
<keyword id="KW-0805">Transcription regulation</keyword>
<keyword id="KW-0862">Zinc</keyword>
<keyword id="KW-0863">Zinc-finger</keyword>
<name>NRDR_PROMH</name>
<evidence type="ECO:0000255" key="1">
    <source>
        <dbReference type="HAMAP-Rule" id="MF_00440"/>
    </source>
</evidence>
<reference key="1">
    <citation type="journal article" date="2008" name="J. Bacteriol.">
        <title>Complete genome sequence of uropathogenic Proteus mirabilis, a master of both adherence and motility.</title>
        <authorList>
            <person name="Pearson M.M."/>
            <person name="Sebaihia M."/>
            <person name="Churcher C."/>
            <person name="Quail M.A."/>
            <person name="Seshasayee A.S."/>
            <person name="Luscombe N.M."/>
            <person name="Abdellah Z."/>
            <person name="Arrosmith C."/>
            <person name="Atkin B."/>
            <person name="Chillingworth T."/>
            <person name="Hauser H."/>
            <person name="Jagels K."/>
            <person name="Moule S."/>
            <person name="Mungall K."/>
            <person name="Norbertczak H."/>
            <person name="Rabbinowitsch E."/>
            <person name="Walker D."/>
            <person name="Whithead S."/>
            <person name="Thomson N.R."/>
            <person name="Rather P.N."/>
            <person name="Parkhill J."/>
            <person name="Mobley H.L.T."/>
        </authorList>
    </citation>
    <scope>NUCLEOTIDE SEQUENCE [LARGE SCALE GENOMIC DNA]</scope>
    <source>
        <strain>HI4320</strain>
    </source>
</reference>